<dbReference type="EC" id="2.4.1.-"/>
<dbReference type="EC" id="2.4.1.274" evidence="7"/>
<dbReference type="EMBL" id="AF097158">
    <property type="protein sequence ID" value="AAD41694.1"/>
    <property type="molecule type" value="mRNA"/>
</dbReference>
<dbReference type="EMBL" id="AF142674">
    <property type="protein sequence ID" value="AAF22224.1"/>
    <property type="molecule type" value="mRNA"/>
</dbReference>
<dbReference type="EMBL" id="BC011149">
    <property type="protein sequence ID" value="AAH11149.1"/>
    <property type="molecule type" value="mRNA"/>
</dbReference>
<dbReference type="CCDS" id="CCDS29086.1"/>
<dbReference type="RefSeq" id="NP_062711.1">
    <property type="nucleotide sequence ID" value="NM_019737.2"/>
</dbReference>
<dbReference type="SMR" id="Q9WVK5"/>
<dbReference type="FunCoup" id="Q9WVK5">
    <property type="interactions" value="343"/>
</dbReference>
<dbReference type="STRING" id="10090.ENSMUSP00000066515"/>
<dbReference type="SwissLipids" id="SLP:000001927"/>
<dbReference type="CAZy" id="GT7">
    <property type="family name" value="Glycosyltransferase Family 7"/>
</dbReference>
<dbReference type="GlyCosmos" id="Q9WVK5">
    <property type="glycosylation" value="8 sites, No reported glycans"/>
</dbReference>
<dbReference type="GlyGen" id="Q9WVK5">
    <property type="glycosylation" value="9 sites, 3 N-linked glycans (3 sites)"/>
</dbReference>
<dbReference type="PhosphoSitePlus" id="Q9WVK5"/>
<dbReference type="PaxDb" id="10090-ENSMUSP00000066515"/>
<dbReference type="ProteomicsDB" id="273591"/>
<dbReference type="Antibodypedia" id="41869">
    <property type="antibodies" value="113 antibodies from 27 providers"/>
</dbReference>
<dbReference type="DNASU" id="56386"/>
<dbReference type="Ensembl" id="ENSMUST00000070080.6">
    <property type="protein sequence ID" value="ENSMUSP00000066515.6"/>
    <property type="gene ID" value="ENSMUSG00000056124.6"/>
</dbReference>
<dbReference type="GeneID" id="56386"/>
<dbReference type="KEGG" id="mmu:56386"/>
<dbReference type="UCSC" id="uc008eeu.2">
    <property type="organism name" value="mouse"/>
</dbReference>
<dbReference type="AGR" id="MGI:1928380"/>
<dbReference type="CTD" id="9331"/>
<dbReference type="MGI" id="MGI:1928380">
    <property type="gene designation" value="B4galt6"/>
</dbReference>
<dbReference type="VEuPathDB" id="HostDB:ENSMUSG00000056124"/>
<dbReference type="eggNOG" id="KOG3916">
    <property type="taxonomic scope" value="Eukaryota"/>
</dbReference>
<dbReference type="GeneTree" id="ENSGT00940000158138"/>
<dbReference type="HOGENOM" id="CLU_044391_6_0_1"/>
<dbReference type="InParanoid" id="Q9WVK5"/>
<dbReference type="OMA" id="VVWDCII"/>
<dbReference type="OrthoDB" id="10038994at2759"/>
<dbReference type="PhylomeDB" id="Q9WVK5"/>
<dbReference type="TreeFam" id="TF312834"/>
<dbReference type="BRENDA" id="2.4.1.274">
    <property type="organism ID" value="3474"/>
</dbReference>
<dbReference type="Reactome" id="R-MMU-2022854">
    <property type="pathway name" value="Keratan sulfate biosynthesis"/>
</dbReference>
<dbReference type="Reactome" id="R-MMU-913709">
    <property type="pathway name" value="O-linked glycosylation of mucins"/>
</dbReference>
<dbReference type="Reactome" id="R-MMU-975577">
    <property type="pathway name" value="N-Glycan antennae elongation"/>
</dbReference>
<dbReference type="Reactome" id="R-MMU-9840309">
    <property type="pathway name" value="Glycosphingolipid biosynthesis"/>
</dbReference>
<dbReference type="UniPathway" id="UPA00378"/>
<dbReference type="BioGRID-ORCS" id="56386">
    <property type="hits" value="1 hit in 79 CRISPR screens"/>
</dbReference>
<dbReference type="ChiTaRS" id="B4galt6">
    <property type="organism name" value="mouse"/>
</dbReference>
<dbReference type="PRO" id="PR:Q9WVK5"/>
<dbReference type="Proteomes" id="UP000000589">
    <property type="component" value="Chromosome 18"/>
</dbReference>
<dbReference type="RNAct" id="Q9WVK5">
    <property type="molecule type" value="protein"/>
</dbReference>
<dbReference type="Bgee" id="ENSMUSG00000056124">
    <property type="expression patterns" value="Expressed in dorsomedial nucleus of hypothalamus and 269 other cell types or tissues"/>
</dbReference>
<dbReference type="ExpressionAtlas" id="Q9WVK5">
    <property type="expression patterns" value="baseline and differential"/>
</dbReference>
<dbReference type="GO" id="GO:0032580">
    <property type="term" value="C:Golgi cisterna membrane"/>
    <property type="evidence" value="ECO:0007669"/>
    <property type="project" value="UniProtKB-SubCell"/>
</dbReference>
<dbReference type="GO" id="GO:0008378">
    <property type="term" value="F:galactosyltransferase activity"/>
    <property type="evidence" value="ECO:0000266"/>
    <property type="project" value="MGI"/>
</dbReference>
<dbReference type="GO" id="GO:0046872">
    <property type="term" value="F:metal ion binding"/>
    <property type="evidence" value="ECO:0007669"/>
    <property type="project" value="UniProtKB-KW"/>
</dbReference>
<dbReference type="GO" id="GO:0008489">
    <property type="term" value="F:UDP-galactose:glucosylceramide beta-1,4-galactosyltransferase activity"/>
    <property type="evidence" value="ECO:0000315"/>
    <property type="project" value="UniProtKB"/>
</dbReference>
<dbReference type="GO" id="GO:0005975">
    <property type="term" value="P:carbohydrate metabolic process"/>
    <property type="evidence" value="ECO:0007669"/>
    <property type="project" value="InterPro"/>
</dbReference>
<dbReference type="GO" id="GO:0022010">
    <property type="term" value="P:central nervous system myelination"/>
    <property type="evidence" value="ECO:0000315"/>
    <property type="project" value="UniProtKB"/>
</dbReference>
<dbReference type="GO" id="GO:0021955">
    <property type="term" value="P:central nervous system neuron axonogenesis"/>
    <property type="evidence" value="ECO:0000315"/>
    <property type="project" value="UniProtKB"/>
</dbReference>
<dbReference type="GO" id="GO:0010706">
    <property type="term" value="P:ganglioside biosynthetic process via lactosylceramide"/>
    <property type="evidence" value="ECO:0000315"/>
    <property type="project" value="UniProtKB"/>
</dbReference>
<dbReference type="GO" id="GO:0001572">
    <property type="term" value="P:lactosylceramide biosynthetic process"/>
    <property type="evidence" value="ECO:0007669"/>
    <property type="project" value="Ensembl"/>
</dbReference>
<dbReference type="GO" id="GO:0042551">
    <property type="term" value="P:neuron maturation"/>
    <property type="evidence" value="ECO:0000315"/>
    <property type="project" value="UniProtKB"/>
</dbReference>
<dbReference type="GO" id="GO:0006486">
    <property type="term" value="P:protein glycosylation"/>
    <property type="evidence" value="ECO:0007669"/>
    <property type="project" value="UniProtKB-UniPathway"/>
</dbReference>
<dbReference type="GO" id="GO:0030148">
    <property type="term" value="P:sphingolipid biosynthetic process"/>
    <property type="evidence" value="ECO:0000304"/>
    <property type="project" value="MGI"/>
</dbReference>
<dbReference type="CDD" id="cd00899">
    <property type="entry name" value="b4GalT"/>
    <property type="match status" value="1"/>
</dbReference>
<dbReference type="FunFam" id="3.90.550.10:FF:000037">
    <property type="entry name" value="Beta-1,4-galactosyltransferase 6"/>
    <property type="match status" value="1"/>
</dbReference>
<dbReference type="Gene3D" id="3.90.550.10">
    <property type="entry name" value="Spore Coat Polysaccharide Biosynthesis Protein SpsA, Chain A"/>
    <property type="match status" value="1"/>
</dbReference>
<dbReference type="InterPro" id="IPR003859">
    <property type="entry name" value="Galactosyl_T"/>
</dbReference>
<dbReference type="InterPro" id="IPR027791">
    <property type="entry name" value="Galactosyl_T_C"/>
</dbReference>
<dbReference type="InterPro" id="IPR027995">
    <property type="entry name" value="Galactosyl_T_N"/>
</dbReference>
<dbReference type="InterPro" id="IPR029044">
    <property type="entry name" value="Nucleotide-diphossugar_trans"/>
</dbReference>
<dbReference type="PANTHER" id="PTHR19300">
    <property type="entry name" value="BETA-1,4-GALACTOSYLTRANSFERASE"/>
    <property type="match status" value="1"/>
</dbReference>
<dbReference type="PANTHER" id="PTHR19300:SF47">
    <property type="entry name" value="BETA-1,4-GALACTOSYLTRANSFERASE 6"/>
    <property type="match status" value="1"/>
</dbReference>
<dbReference type="Pfam" id="PF02709">
    <property type="entry name" value="Glyco_transf_7C"/>
    <property type="match status" value="1"/>
</dbReference>
<dbReference type="Pfam" id="PF13733">
    <property type="entry name" value="Glyco_transf_7N"/>
    <property type="match status" value="1"/>
</dbReference>
<dbReference type="PRINTS" id="PR02050">
    <property type="entry name" value="B14GALTRFASE"/>
</dbReference>
<dbReference type="SUPFAM" id="SSF53448">
    <property type="entry name" value="Nucleotide-diphospho-sugar transferases"/>
    <property type="match status" value="1"/>
</dbReference>
<reference key="1">
    <citation type="submission" date="1998-10" db="EMBL/GenBank/DDBJ databases">
        <title>cDNA cloning and expression of mouse lactosylceramide synthase.</title>
        <authorList>
            <person name="Takizawa M."/>
            <person name="Nomura T."/>
            <person name="Wakisaka E."/>
            <person name="Aoki J."/>
            <person name="Arai H."/>
            <person name="Inoue K."/>
            <person name="Matsuo N."/>
        </authorList>
    </citation>
    <scope>NUCLEOTIDE SEQUENCE [MRNA]</scope>
    <source>
        <strain>C57BL/6J</strain>
        <tissue>Brain</tissue>
    </source>
</reference>
<reference key="2">
    <citation type="submission" date="1999-04" db="EMBL/GenBank/DDBJ databases">
        <title>Murine beta-1,4-galactosyltransferase family members.</title>
        <authorList>
            <person name="Lo N.-W."/>
            <person name="Shaper N.L."/>
            <person name="Shaper J.H."/>
        </authorList>
    </citation>
    <scope>NUCLEOTIDE SEQUENCE [MRNA]</scope>
</reference>
<reference key="3">
    <citation type="journal article" date="2004" name="Genome Res.">
        <title>The status, quality, and expansion of the NIH full-length cDNA project: the Mammalian Gene Collection (MGC).</title>
        <authorList>
            <consortium name="The MGC Project Team"/>
        </authorList>
    </citation>
    <scope>NUCLEOTIDE SEQUENCE [LARGE SCALE MRNA]</scope>
    <source>
        <tissue>Mammary gland</tissue>
    </source>
</reference>
<reference key="4">
    <citation type="journal article" date="2013" name="Glycobiology">
        <title>Beta4GalT6 is involved in the synthesis of lactosylceramide with less intensity than beta4GalT5.</title>
        <authorList>
            <person name="Tokuda N."/>
            <person name="Numata S."/>
            <person name="Li X."/>
            <person name="Nomura T."/>
            <person name="Takizawa M."/>
            <person name="Kondo Y."/>
            <person name="Yamashita Y."/>
            <person name="Hashimoto N."/>
            <person name="Kiyono T."/>
            <person name="Urano T."/>
            <person name="Furukawa K."/>
            <person name="Furukawa K."/>
        </authorList>
    </citation>
    <scope>FUNCTION AS GLUCOSYLCERAMIDE BETA-1,4-GALACTOSYLTRANSFERASE</scope>
    <scope>CATALYTIC ACTIVITY</scope>
    <scope>DISRUPTION PHENOTYPE</scope>
    <scope>TISSUE SPECIFICITY</scope>
</reference>
<reference key="5">
    <citation type="journal article" date="2018" name="PLoS Genet.">
        <title>Lactosylceramide synthases encoded by B4galt5 and 6 genes are pivotal for neuronal generation and myelin formation in mice.</title>
        <authorList>
            <person name="Yoshihara T."/>
            <person name="Satake H."/>
            <person name="Nishie T."/>
            <person name="Okino N."/>
            <person name="Hatta T."/>
            <person name="Otani H."/>
            <person name="Naruse C."/>
            <person name="Suzuki H."/>
            <person name="Sugihara K."/>
            <person name="Kamimura E."/>
            <person name="Tokuda N."/>
            <person name="Furukawa K."/>
            <person name="Fururkawa K."/>
            <person name="Ito M."/>
            <person name="Asano M."/>
        </authorList>
    </citation>
    <scope>FUNCTION AS GLUCOSYLCERAMIDE BETA-1,4-GALACTOSYLTRANSFERASE</scope>
    <scope>CATALYTIC ACTIVITY</scope>
    <scope>DISRUPTION PHENOTYPE</scope>
</reference>
<protein>
    <recommendedName>
        <fullName evidence="10">Beta-1,4-galactosyltransferase 6</fullName>
        <shortName>Beta-1,4-GalTase 6</shortName>
        <shortName>Beta4Gal-T6</shortName>
        <shortName>b4Gal-T6</shortName>
        <ecNumber>2.4.1.-</ecNumber>
    </recommendedName>
    <alternativeName>
        <fullName>Glucosylceramide beta-1,4-galactosyltransferase</fullName>
        <ecNumber evidence="7">2.4.1.274</ecNumber>
    </alternativeName>
    <alternativeName>
        <fullName evidence="8 9">Lactosylceramide synthase</fullName>
        <shortName evidence="8 9">LacCer synthase</shortName>
    </alternativeName>
    <alternativeName>
        <fullName>UDP-Gal:beta-GlcNAc beta-1,4-galactosyltransferase 6</fullName>
    </alternativeName>
    <alternativeName>
        <fullName evidence="4">UDP-Gal:glucosylceramide beta-1,4-galactosyltransferase</fullName>
    </alternativeName>
    <alternativeName>
        <fullName>UDP-galactose:beta-N-acetylglucosamine beta-1,4-galactosyltransferase 6</fullName>
    </alternativeName>
</protein>
<organism>
    <name type="scientific">Mus musculus</name>
    <name type="common">Mouse</name>
    <dbReference type="NCBI Taxonomy" id="10090"/>
    <lineage>
        <taxon>Eukaryota</taxon>
        <taxon>Metazoa</taxon>
        <taxon>Chordata</taxon>
        <taxon>Craniata</taxon>
        <taxon>Vertebrata</taxon>
        <taxon>Euteleostomi</taxon>
        <taxon>Mammalia</taxon>
        <taxon>Eutheria</taxon>
        <taxon>Euarchontoglires</taxon>
        <taxon>Glires</taxon>
        <taxon>Rodentia</taxon>
        <taxon>Myomorpha</taxon>
        <taxon>Muroidea</taxon>
        <taxon>Muridae</taxon>
        <taxon>Murinae</taxon>
        <taxon>Mus</taxon>
        <taxon>Mus</taxon>
    </lineage>
</organism>
<gene>
    <name evidence="11" type="primary">B4galt6</name>
</gene>
<accession>Q9WVK5</accession>
<feature type="chain" id="PRO_0000080548" description="Beta-1,4-galactosyltransferase 6">
    <location>
        <begin position="1"/>
        <end position="382"/>
    </location>
</feature>
<feature type="topological domain" description="Cytoplasmic" evidence="5">
    <location>
        <begin position="1"/>
        <end position="15"/>
    </location>
</feature>
<feature type="transmembrane region" description="Helical; Signal-anchor for type II membrane protein" evidence="5">
    <location>
        <begin position="16"/>
        <end position="35"/>
    </location>
</feature>
<feature type="topological domain" description="Lumenal" evidence="5">
    <location>
        <begin position="36"/>
        <end position="382"/>
    </location>
</feature>
<feature type="binding site" evidence="3">
    <location>
        <begin position="163"/>
        <end position="167"/>
    </location>
    <ligand>
        <name>UDP-alpha-D-galactose</name>
        <dbReference type="ChEBI" id="CHEBI:66914"/>
    </ligand>
</feature>
<feature type="binding site" evidence="3">
    <location>
        <begin position="202"/>
        <end position="204"/>
    </location>
    <ligand>
        <name>UDP-alpha-D-galactose</name>
        <dbReference type="ChEBI" id="CHEBI:66914"/>
    </ligand>
</feature>
<feature type="binding site" evidence="3">
    <location>
        <begin position="229"/>
        <end position="230"/>
    </location>
    <ligand>
        <name>UDP-alpha-D-galactose</name>
        <dbReference type="ChEBI" id="CHEBI:66914"/>
    </ligand>
</feature>
<feature type="binding site" evidence="3">
    <location>
        <position position="230"/>
    </location>
    <ligand>
        <name>Mn(2+)</name>
        <dbReference type="ChEBI" id="CHEBI:29035"/>
    </ligand>
</feature>
<feature type="binding site" evidence="3">
    <location>
        <position position="258"/>
    </location>
    <ligand>
        <name>UDP-alpha-D-galactose</name>
        <dbReference type="ChEBI" id="CHEBI:66914"/>
    </ligand>
</feature>
<feature type="binding site" evidence="3">
    <location>
        <position position="290"/>
    </location>
    <ligand>
        <name>UDP-alpha-D-galactose</name>
        <dbReference type="ChEBI" id="CHEBI:66914"/>
    </ligand>
</feature>
<feature type="binding site" evidence="3">
    <location>
        <begin position="292"/>
        <end position="295"/>
    </location>
    <ligand>
        <name>N-acetyl-D-glucosamine</name>
        <dbReference type="ChEBI" id="CHEBI:506227"/>
    </ligand>
</feature>
<feature type="binding site" evidence="3">
    <location>
        <begin position="323"/>
        <end position="324"/>
    </location>
    <ligand>
        <name>UDP-alpha-D-galactose</name>
        <dbReference type="ChEBI" id="CHEBI:66914"/>
    </ligand>
</feature>
<feature type="binding site" evidence="3">
    <location>
        <position position="323"/>
    </location>
    <ligand>
        <name>Mn(2+)</name>
        <dbReference type="ChEBI" id="CHEBI:29035"/>
    </ligand>
</feature>
<feature type="binding site" evidence="3">
    <location>
        <position position="334"/>
    </location>
    <ligand>
        <name>N-acetyl-D-glucosamine</name>
        <dbReference type="ChEBI" id="CHEBI:506227"/>
    </ligand>
</feature>
<feature type="glycosylation site" description="N-linked (GlcNAc...) asparagine" evidence="5">
    <location>
        <position position="71"/>
    </location>
</feature>
<feature type="glycosylation site" description="N-linked (GlcNAc...) asparagine" evidence="5">
    <location>
        <position position="75"/>
    </location>
</feature>
<feature type="glycosylation site" description="N-linked (GlcNAc...) asparagine" evidence="5">
    <location>
        <position position="83"/>
    </location>
</feature>
<feature type="glycosylation site" description="N-linked (GlcNAc...) asparagine" evidence="5">
    <location>
        <position position="84"/>
    </location>
</feature>
<feature type="glycosylation site" description="N-linked (GlcNAc...) asparagine" evidence="5">
    <location>
        <position position="99"/>
    </location>
</feature>
<feature type="glycosylation site" description="N-linked (GlcNAc...) asparagine" evidence="5">
    <location>
        <position position="122"/>
    </location>
</feature>
<feature type="glycosylation site" description="N-linked (GlcNAc...) asparagine" evidence="5">
    <location>
        <position position="307"/>
    </location>
</feature>
<feature type="glycosylation site" description="N-linked (GlcNAc...) asparagine" evidence="5">
    <location>
        <position position="367"/>
    </location>
</feature>
<feature type="disulfide bond" evidence="2">
    <location>
        <begin position="108"/>
        <end position="152"/>
    </location>
</feature>
<feature type="disulfide bond" evidence="2">
    <location>
        <begin position="223"/>
        <end position="242"/>
    </location>
</feature>
<evidence type="ECO:0000250" key="1">
    <source>
        <dbReference type="UniProtKB" id="O88419"/>
    </source>
</evidence>
<evidence type="ECO:0000250" key="2">
    <source>
        <dbReference type="UniProtKB" id="P15291"/>
    </source>
</evidence>
<evidence type="ECO:0000250" key="3">
    <source>
        <dbReference type="UniProtKB" id="Q9UBV7"/>
    </source>
</evidence>
<evidence type="ECO:0000250" key="4">
    <source>
        <dbReference type="UniProtKB" id="Q9UBX8"/>
    </source>
</evidence>
<evidence type="ECO:0000255" key="5"/>
<evidence type="ECO:0000269" key="6">
    <source>
    </source>
</evidence>
<evidence type="ECO:0000269" key="7">
    <source>
    </source>
</evidence>
<evidence type="ECO:0000303" key="8">
    <source>
    </source>
</evidence>
<evidence type="ECO:0000303" key="9">
    <source>
    </source>
</evidence>
<evidence type="ECO:0000305" key="10"/>
<evidence type="ECO:0000312" key="11">
    <source>
        <dbReference type="MGI" id="MGI:1928380"/>
    </source>
</evidence>
<keyword id="KW-0106">Calcium</keyword>
<keyword id="KW-1015">Disulfide bond</keyword>
<keyword id="KW-0325">Glycoprotein</keyword>
<keyword id="KW-0328">Glycosyltransferase</keyword>
<keyword id="KW-0333">Golgi apparatus</keyword>
<keyword id="KW-0444">Lipid biosynthesis</keyword>
<keyword id="KW-0443">Lipid metabolism</keyword>
<keyword id="KW-0460">Magnesium</keyword>
<keyword id="KW-0464">Manganese</keyword>
<keyword id="KW-0472">Membrane</keyword>
<keyword id="KW-0479">Metal-binding</keyword>
<keyword id="KW-1185">Reference proteome</keyword>
<keyword id="KW-0735">Signal-anchor</keyword>
<keyword id="KW-0746">Sphingolipid metabolism</keyword>
<keyword id="KW-0808">Transferase</keyword>
<keyword id="KW-0812">Transmembrane</keyword>
<keyword id="KW-1133">Transmembrane helix</keyword>
<comment type="function">
    <text evidence="6 7">Catalyzes the synthesis of lactosylceramide (LacCer) via the transfer of galactose from UDP-galactose to glucosylceramide (GlcCer) (PubMed:23882130, PubMed:30114188). LacCer is the starting point in the biosynthesis of all gangliosides (membrane-bound glycosphingolipids) which play pivotal roles in the CNS including neuronal maturation and axonal and myelin formation (PubMed:30114188).</text>
</comment>
<comment type="catalytic activity">
    <reaction evidence="6 7">
        <text>a beta-D-glucosyl-(1&lt;-&gt;1')-N-acylsphing-4-enine + UDP-alpha-D-galactose = a beta-D-Gal-(1-&gt;4)-beta-D-Glc-(1&lt;-&gt;1)-Cer(d18:1(4E)) + UDP + H(+)</text>
        <dbReference type="Rhea" id="RHEA:31495"/>
        <dbReference type="ChEBI" id="CHEBI:15378"/>
        <dbReference type="ChEBI" id="CHEBI:17950"/>
        <dbReference type="ChEBI" id="CHEBI:22801"/>
        <dbReference type="ChEBI" id="CHEBI:58223"/>
        <dbReference type="ChEBI" id="CHEBI:66914"/>
        <dbReference type="EC" id="2.4.1.274"/>
    </reaction>
    <physiologicalReaction direction="left-to-right" evidence="7">
        <dbReference type="Rhea" id="RHEA:31496"/>
    </physiologicalReaction>
</comment>
<comment type="cofactor">
    <cofactor evidence="1">
        <name>Mn(2+)</name>
        <dbReference type="ChEBI" id="CHEBI:29035"/>
    </cofactor>
    <cofactor evidence="1">
        <name>Mg(2+)</name>
        <dbReference type="ChEBI" id="CHEBI:18420"/>
    </cofactor>
    <cofactor evidence="1">
        <name>Ca(2+)</name>
        <dbReference type="ChEBI" id="CHEBI:29108"/>
    </cofactor>
</comment>
<comment type="activity regulation">
    <text evidence="1">Inhibited by EDTA.</text>
</comment>
<comment type="pathway">
    <text>Protein modification; protein glycosylation.</text>
</comment>
<comment type="pathway">
    <text>Sphingolipid metabolism.</text>
</comment>
<comment type="subcellular location">
    <subcellularLocation>
        <location evidence="2">Golgi apparatus</location>
        <location evidence="2">Golgi stack membrane</location>
        <topology>Single-pass type II membrane protein</topology>
    </subcellularLocation>
    <text evidence="2">Trans cisternae of Golgi stack.</text>
</comment>
<comment type="tissue specificity">
    <text evidence="6">Brain and kidney.</text>
</comment>
<comment type="disruption phenotype">
    <text evidence="6 7">Single knockout mice are born normally and grow to adulthood without apparent abnormalities (PubMed:23882130). Decreased glucosylceramide beta-1,4-galactosyltransferase activity seen in the brain of female mice whereas minimal or no reduction in the enzyme activity seen in the male brain (PubMed:23882130). Double knockout mice of B4GALT5 and B4GALT6 genes develop normally during embryogenesis and perinatal stage (PubMed:30114188). However, they show growth retardation and motor deficits with hindlimb dysfunction at 2 weeks of age, and they all die by 4 weeks of age (PubMed:30114188). Axonal and myelin formation are remarkably impaired in the spinal cords and increased immature neurons in the cerebral cortices seen (PubMed:30114188). Glucosylceramide beta-1,4-galactosyltransferase activity and major brain gangliosides are completely absent in the brain (PubMed:30114188).</text>
</comment>
<comment type="similarity">
    <text evidence="10">Belongs to the glycosyltransferase 7 family.</text>
</comment>
<comment type="online information" name="Functional Glycomics Gateway - GTase">
    <link uri="http://www.functionalglycomics.org/glycomics/molecule/jsp/glycoEnzyme/viewGlycoEnzyme.jsp?gbpId=gt_mou_465"/>
    <text>b4GalT6</text>
</comment>
<proteinExistence type="evidence at protein level"/>
<name>B4GT6_MOUSE</name>
<sequence length="382" mass="44759">MSALKRMMRVSNRSLIAFIFFFSLSTSCLYFIYVAPGIANTYLFMVQARGIMLRENVKTIGHMIRLYTNKNTTLNGTDYPEGNNTSDYLVQTTTYLPQNFTYLPHLPCPEKLPYMRGFLSVNVSEISFDEVHQLFSKDSEIGPGGHWRPKDCKPRWKVAVLIPFRNRHEHLPIFFLHLIPMLQKQRLEFAFYVIEQTGTQPFNRAMLFNVGFKEAMKDRAWDCVIFHDVDHLPENDRNYYGCGEMPRHFAAKLDKYMYILPYKEFFGGVSGLTVEQFRKINGFPNAFWGWGGEDDDLWNRVHYAGYNVTRPEGDLGKYISIPHHHRGEVQFLGRYKLLRYSKERQYIDGLNNLLYTPKILVDRLYTNISVNLMPELAPIEDY</sequence>